<proteinExistence type="inferred from homology"/>
<comment type="function">
    <text evidence="1">Negatively regulates its own expression and that of the subsequent genes in the proximal part of the division and cell wall (dcw) gene cluster. Acts by binding directly to DNA. May also regulate the expression of genes outside the dcw cluster.</text>
</comment>
<comment type="subunit">
    <text evidence="1">Forms oligomers.</text>
</comment>
<comment type="subcellular location">
    <subcellularLocation>
        <location evidence="1">Cytoplasm</location>
        <location evidence="1">Nucleoid</location>
    </subcellularLocation>
</comment>
<comment type="similarity">
    <text evidence="1">Belongs to the MraZ family.</text>
</comment>
<dbReference type="EMBL" id="CP001113">
    <property type="protein sequence ID" value="ACF61485.1"/>
    <property type="molecule type" value="Genomic_DNA"/>
</dbReference>
<dbReference type="RefSeq" id="WP_000488294.1">
    <property type="nucleotide sequence ID" value="NZ_CCMR01000003.1"/>
</dbReference>
<dbReference type="SMR" id="B4SU41"/>
<dbReference type="KEGG" id="see:SNSL254_A0131"/>
<dbReference type="HOGENOM" id="CLU_107907_2_0_6"/>
<dbReference type="Proteomes" id="UP000008824">
    <property type="component" value="Chromosome"/>
</dbReference>
<dbReference type="GO" id="GO:0005737">
    <property type="term" value="C:cytoplasm"/>
    <property type="evidence" value="ECO:0007669"/>
    <property type="project" value="UniProtKB-UniRule"/>
</dbReference>
<dbReference type="GO" id="GO:0009295">
    <property type="term" value="C:nucleoid"/>
    <property type="evidence" value="ECO:0007669"/>
    <property type="project" value="UniProtKB-SubCell"/>
</dbReference>
<dbReference type="GO" id="GO:0003700">
    <property type="term" value="F:DNA-binding transcription factor activity"/>
    <property type="evidence" value="ECO:0007669"/>
    <property type="project" value="UniProtKB-UniRule"/>
</dbReference>
<dbReference type="GO" id="GO:0000976">
    <property type="term" value="F:transcription cis-regulatory region binding"/>
    <property type="evidence" value="ECO:0007669"/>
    <property type="project" value="TreeGrafter"/>
</dbReference>
<dbReference type="GO" id="GO:2000143">
    <property type="term" value="P:negative regulation of DNA-templated transcription initiation"/>
    <property type="evidence" value="ECO:0007669"/>
    <property type="project" value="TreeGrafter"/>
</dbReference>
<dbReference type="CDD" id="cd16321">
    <property type="entry name" value="MraZ_C"/>
    <property type="match status" value="1"/>
</dbReference>
<dbReference type="CDD" id="cd16320">
    <property type="entry name" value="MraZ_N"/>
    <property type="match status" value="1"/>
</dbReference>
<dbReference type="FunFam" id="3.40.1550.20:FF:000001">
    <property type="entry name" value="Transcriptional regulator MraZ"/>
    <property type="match status" value="1"/>
</dbReference>
<dbReference type="Gene3D" id="3.40.1550.20">
    <property type="entry name" value="Transcriptional regulator MraZ domain"/>
    <property type="match status" value="1"/>
</dbReference>
<dbReference type="HAMAP" id="MF_01008">
    <property type="entry name" value="MraZ"/>
    <property type="match status" value="1"/>
</dbReference>
<dbReference type="InterPro" id="IPR003444">
    <property type="entry name" value="MraZ"/>
</dbReference>
<dbReference type="InterPro" id="IPR035644">
    <property type="entry name" value="MraZ_C"/>
</dbReference>
<dbReference type="InterPro" id="IPR020603">
    <property type="entry name" value="MraZ_dom"/>
</dbReference>
<dbReference type="InterPro" id="IPR035642">
    <property type="entry name" value="MraZ_N"/>
</dbReference>
<dbReference type="InterPro" id="IPR038619">
    <property type="entry name" value="MraZ_sf"/>
</dbReference>
<dbReference type="InterPro" id="IPR007159">
    <property type="entry name" value="SpoVT-AbrB_dom"/>
</dbReference>
<dbReference type="InterPro" id="IPR037914">
    <property type="entry name" value="SpoVT-AbrB_sf"/>
</dbReference>
<dbReference type="NCBIfam" id="TIGR00242">
    <property type="entry name" value="division/cell wall cluster transcriptional repressor MraZ"/>
    <property type="match status" value="1"/>
</dbReference>
<dbReference type="PANTHER" id="PTHR34701">
    <property type="entry name" value="TRANSCRIPTIONAL REGULATOR MRAZ"/>
    <property type="match status" value="1"/>
</dbReference>
<dbReference type="PANTHER" id="PTHR34701:SF1">
    <property type="entry name" value="TRANSCRIPTIONAL REGULATOR MRAZ"/>
    <property type="match status" value="1"/>
</dbReference>
<dbReference type="Pfam" id="PF02381">
    <property type="entry name" value="MraZ"/>
    <property type="match status" value="2"/>
</dbReference>
<dbReference type="SUPFAM" id="SSF89447">
    <property type="entry name" value="AbrB/MazE/MraZ-like"/>
    <property type="match status" value="1"/>
</dbReference>
<dbReference type="PROSITE" id="PS51740">
    <property type="entry name" value="SPOVT_ABRB"/>
    <property type="match status" value="2"/>
</dbReference>
<gene>
    <name evidence="1" type="primary">mraZ</name>
    <name type="ordered locus">SNSL254_A0131</name>
</gene>
<name>MRAZ_SALNS</name>
<reference key="1">
    <citation type="journal article" date="2011" name="J. Bacteriol.">
        <title>Comparative genomics of 28 Salmonella enterica isolates: evidence for CRISPR-mediated adaptive sublineage evolution.</title>
        <authorList>
            <person name="Fricke W.F."/>
            <person name="Mammel M.K."/>
            <person name="McDermott P.F."/>
            <person name="Tartera C."/>
            <person name="White D.G."/>
            <person name="Leclerc J.E."/>
            <person name="Ravel J."/>
            <person name="Cebula T.A."/>
        </authorList>
    </citation>
    <scope>NUCLEOTIDE SEQUENCE [LARGE SCALE GENOMIC DNA]</scope>
    <source>
        <strain>SL254</strain>
    </source>
</reference>
<sequence>MFRGATLVNLDSKGRLTVPTRYREQLIESATGQMVCTIDIHHPCLLLYPLPEWEIIEQKLSRLSSMNPVERRVQRLLLGHASECQMDGAGRLLIAPVLRQHAGLTKEVMLVGQFNKFELWDETTWYQQVKEDIDAEQSATETLSERLQDLSL</sequence>
<accession>B4SU41</accession>
<keyword id="KW-0963">Cytoplasm</keyword>
<keyword id="KW-0238">DNA-binding</keyword>
<keyword id="KW-0677">Repeat</keyword>
<keyword id="KW-0678">Repressor</keyword>
<keyword id="KW-0804">Transcription</keyword>
<keyword id="KW-0805">Transcription regulation</keyword>
<feature type="chain" id="PRO_1000191331" description="Transcriptional regulator MraZ">
    <location>
        <begin position="1"/>
        <end position="152"/>
    </location>
</feature>
<feature type="domain" description="SpoVT-AbrB 1" evidence="2">
    <location>
        <begin position="5"/>
        <end position="52"/>
    </location>
</feature>
<feature type="domain" description="SpoVT-AbrB 2" evidence="2">
    <location>
        <begin position="81"/>
        <end position="124"/>
    </location>
</feature>
<evidence type="ECO:0000255" key="1">
    <source>
        <dbReference type="HAMAP-Rule" id="MF_01008"/>
    </source>
</evidence>
<evidence type="ECO:0000255" key="2">
    <source>
        <dbReference type="PROSITE-ProRule" id="PRU01076"/>
    </source>
</evidence>
<organism>
    <name type="scientific">Salmonella newport (strain SL254)</name>
    <dbReference type="NCBI Taxonomy" id="423368"/>
    <lineage>
        <taxon>Bacteria</taxon>
        <taxon>Pseudomonadati</taxon>
        <taxon>Pseudomonadota</taxon>
        <taxon>Gammaproteobacteria</taxon>
        <taxon>Enterobacterales</taxon>
        <taxon>Enterobacteriaceae</taxon>
        <taxon>Salmonella</taxon>
    </lineage>
</organism>
<protein>
    <recommendedName>
        <fullName>Transcriptional regulator MraZ</fullName>
    </recommendedName>
</protein>